<protein>
    <recommendedName>
        <fullName evidence="1">1-deoxy-D-xylulose 5-phosphate reductoisomerase</fullName>
        <shortName evidence="1">DXP reductoisomerase</shortName>
        <ecNumber evidence="1">1.1.1.267</ecNumber>
    </recommendedName>
    <alternativeName>
        <fullName evidence="1">1-deoxyxylulose-5-phosphate reductoisomerase</fullName>
    </alternativeName>
    <alternativeName>
        <fullName evidence="1">2-C-methyl-D-erythritol 4-phosphate synthase</fullName>
    </alternativeName>
</protein>
<name>DXR_CLOK5</name>
<reference key="1">
    <citation type="journal article" date="2008" name="Proc. Natl. Acad. Sci. U.S.A.">
        <title>The genome of Clostridium kluyveri, a strict anaerobe with unique metabolic features.</title>
        <authorList>
            <person name="Seedorf H."/>
            <person name="Fricke W.F."/>
            <person name="Veith B."/>
            <person name="Brueggemann H."/>
            <person name="Liesegang H."/>
            <person name="Strittmatter A."/>
            <person name="Miethke M."/>
            <person name="Buckel W."/>
            <person name="Hinderberger J."/>
            <person name="Li F."/>
            <person name="Hagemeier C."/>
            <person name="Thauer R.K."/>
            <person name="Gottschalk G."/>
        </authorList>
    </citation>
    <scope>NUCLEOTIDE SEQUENCE [LARGE SCALE GENOMIC DNA]</scope>
    <source>
        <strain>ATCC 8527 / DSM 555 / NBRC 12016 / NCIMB 10680 / K1</strain>
    </source>
</reference>
<gene>
    <name evidence="1" type="primary">dxr</name>
    <name type="ordered locus">CKL_1423</name>
</gene>
<organism>
    <name type="scientific">Clostridium kluyveri (strain ATCC 8527 / DSM 555 / NBRC 12016 / NCIMB 10680 / K1)</name>
    <dbReference type="NCBI Taxonomy" id="431943"/>
    <lineage>
        <taxon>Bacteria</taxon>
        <taxon>Bacillati</taxon>
        <taxon>Bacillota</taxon>
        <taxon>Clostridia</taxon>
        <taxon>Eubacteriales</taxon>
        <taxon>Clostridiaceae</taxon>
        <taxon>Clostridium</taxon>
    </lineage>
</organism>
<comment type="function">
    <text evidence="1">Catalyzes the NADPH-dependent rearrangement and reduction of 1-deoxy-D-xylulose-5-phosphate (DXP) to 2-C-methyl-D-erythritol 4-phosphate (MEP).</text>
</comment>
<comment type="catalytic activity">
    <reaction evidence="1">
        <text>2-C-methyl-D-erythritol 4-phosphate + NADP(+) = 1-deoxy-D-xylulose 5-phosphate + NADPH + H(+)</text>
        <dbReference type="Rhea" id="RHEA:13717"/>
        <dbReference type="ChEBI" id="CHEBI:15378"/>
        <dbReference type="ChEBI" id="CHEBI:57783"/>
        <dbReference type="ChEBI" id="CHEBI:57792"/>
        <dbReference type="ChEBI" id="CHEBI:58262"/>
        <dbReference type="ChEBI" id="CHEBI:58349"/>
        <dbReference type="EC" id="1.1.1.267"/>
    </reaction>
    <physiologicalReaction direction="right-to-left" evidence="1">
        <dbReference type="Rhea" id="RHEA:13719"/>
    </physiologicalReaction>
</comment>
<comment type="cofactor">
    <cofactor evidence="1">
        <name>Mg(2+)</name>
        <dbReference type="ChEBI" id="CHEBI:18420"/>
    </cofactor>
    <cofactor evidence="1">
        <name>Mn(2+)</name>
        <dbReference type="ChEBI" id="CHEBI:29035"/>
    </cofactor>
</comment>
<comment type="pathway">
    <text evidence="1">Isoprenoid biosynthesis; isopentenyl diphosphate biosynthesis via DXP pathway; isopentenyl diphosphate from 1-deoxy-D-xylulose 5-phosphate: step 1/6.</text>
</comment>
<comment type="similarity">
    <text evidence="1">Belongs to the DXR family.</text>
</comment>
<keyword id="KW-0414">Isoprene biosynthesis</keyword>
<keyword id="KW-0464">Manganese</keyword>
<keyword id="KW-0479">Metal-binding</keyword>
<keyword id="KW-0521">NADP</keyword>
<keyword id="KW-0560">Oxidoreductase</keyword>
<keyword id="KW-1185">Reference proteome</keyword>
<proteinExistence type="inferred from homology"/>
<accession>A5N834</accession>
<sequence length="385" mass="43248">MKKISILGVTGSIGTQALDILRKDEENFKLVAVSSHSSVNKLLDIVDEFNPSYAVLTERNAYLKFKDHCSNKNLDTKILFGIDGLNTIVALPDIDMVLTSVVGMVGLVPTIKAIESGKDIALANKETLVVGGELVTKLAKKNKVKIFPVDSEHSAIFQCIKGNNFQDIEKLYLTASGGPFRGRTREQLFNVTVKEALNHPSWRMGKKLTIDSATLMNKGLEVIEAHFLFDMPYEKIKVVIHPESIVHSMVEYNDGSIMAQLSSTDMRLPIQYALNYAKRREALVNRLDFYNMKNLSFEKPDIDTFKPLKLAYDAGKIGGTMPAILNCANEAAVELFLFNKIKFLDISYILEECMNKFTCSNTYTIEDLLHIEIKVKKYVKDKFSK</sequence>
<dbReference type="EC" id="1.1.1.267" evidence="1"/>
<dbReference type="EMBL" id="CP000673">
    <property type="protein sequence ID" value="EDK33465.1"/>
    <property type="molecule type" value="Genomic_DNA"/>
</dbReference>
<dbReference type="RefSeq" id="WP_012101812.1">
    <property type="nucleotide sequence ID" value="NC_009706.1"/>
</dbReference>
<dbReference type="SMR" id="A5N834"/>
<dbReference type="STRING" id="431943.CKL_1423"/>
<dbReference type="KEGG" id="ckl:CKL_1423"/>
<dbReference type="eggNOG" id="COG0743">
    <property type="taxonomic scope" value="Bacteria"/>
</dbReference>
<dbReference type="HOGENOM" id="CLU_035714_4_0_9"/>
<dbReference type="UniPathway" id="UPA00056">
    <property type="reaction ID" value="UER00092"/>
</dbReference>
<dbReference type="Proteomes" id="UP000002411">
    <property type="component" value="Chromosome"/>
</dbReference>
<dbReference type="GO" id="GO:0030604">
    <property type="term" value="F:1-deoxy-D-xylulose-5-phosphate reductoisomerase activity"/>
    <property type="evidence" value="ECO:0007669"/>
    <property type="project" value="UniProtKB-UniRule"/>
</dbReference>
<dbReference type="GO" id="GO:0030145">
    <property type="term" value="F:manganese ion binding"/>
    <property type="evidence" value="ECO:0007669"/>
    <property type="project" value="TreeGrafter"/>
</dbReference>
<dbReference type="GO" id="GO:0070402">
    <property type="term" value="F:NADPH binding"/>
    <property type="evidence" value="ECO:0007669"/>
    <property type="project" value="InterPro"/>
</dbReference>
<dbReference type="GO" id="GO:0051484">
    <property type="term" value="P:isopentenyl diphosphate biosynthetic process, methylerythritol 4-phosphate pathway involved in terpenoid biosynthetic process"/>
    <property type="evidence" value="ECO:0007669"/>
    <property type="project" value="TreeGrafter"/>
</dbReference>
<dbReference type="FunFam" id="3.40.50.720:FF:000045">
    <property type="entry name" value="1-deoxy-D-xylulose 5-phosphate reductoisomerase"/>
    <property type="match status" value="1"/>
</dbReference>
<dbReference type="Gene3D" id="1.10.1740.10">
    <property type="match status" value="1"/>
</dbReference>
<dbReference type="Gene3D" id="3.40.50.720">
    <property type="entry name" value="NAD(P)-binding Rossmann-like Domain"/>
    <property type="match status" value="1"/>
</dbReference>
<dbReference type="HAMAP" id="MF_00183">
    <property type="entry name" value="DXP_reductoisom"/>
    <property type="match status" value="1"/>
</dbReference>
<dbReference type="InterPro" id="IPR003821">
    <property type="entry name" value="DXP_reductoisomerase"/>
</dbReference>
<dbReference type="InterPro" id="IPR013644">
    <property type="entry name" value="DXP_reductoisomerase_C"/>
</dbReference>
<dbReference type="InterPro" id="IPR013512">
    <property type="entry name" value="DXP_reductoisomerase_N"/>
</dbReference>
<dbReference type="InterPro" id="IPR026877">
    <property type="entry name" value="DXPR_C"/>
</dbReference>
<dbReference type="InterPro" id="IPR036169">
    <property type="entry name" value="DXPR_C_sf"/>
</dbReference>
<dbReference type="InterPro" id="IPR036291">
    <property type="entry name" value="NAD(P)-bd_dom_sf"/>
</dbReference>
<dbReference type="NCBIfam" id="TIGR00243">
    <property type="entry name" value="Dxr"/>
    <property type="match status" value="1"/>
</dbReference>
<dbReference type="NCBIfam" id="NF009114">
    <property type="entry name" value="PRK12464.1"/>
    <property type="match status" value="1"/>
</dbReference>
<dbReference type="PANTHER" id="PTHR30525">
    <property type="entry name" value="1-DEOXY-D-XYLULOSE 5-PHOSPHATE REDUCTOISOMERASE"/>
    <property type="match status" value="1"/>
</dbReference>
<dbReference type="PANTHER" id="PTHR30525:SF0">
    <property type="entry name" value="1-DEOXY-D-XYLULOSE 5-PHOSPHATE REDUCTOISOMERASE, CHLOROPLASTIC"/>
    <property type="match status" value="1"/>
</dbReference>
<dbReference type="Pfam" id="PF08436">
    <property type="entry name" value="DXP_redisom_C"/>
    <property type="match status" value="1"/>
</dbReference>
<dbReference type="Pfam" id="PF02670">
    <property type="entry name" value="DXP_reductoisom"/>
    <property type="match status" value="1"/>
</dbReference>
<dbReference type="Pfam" id="PF13288">
    <property type="entry name" value="DXPR_C"/>
    <property type="match status" value="1"/>
</dbReference>
<dbReference type="PIRSF" id="PIRSF006205">
    <property type="entry name" value="Dxp_reductismrs"/>
    <property type="match status" value="1"/>
</dbReference>
<dbReference type="SUPFAM" id="SSF69055">
    <property type="entry name" value="1-deoxy-D-xylulose-5-phosphate reductoisomerase, C-terminal domain"/>
    <property type="match status" value="1"/>
</dbReference>
<dbReference type="SUPFAM" id="SSF55347">
    <property type="entry name" value="Glyceraldehyde-3-phosphate dehydrogenase-like, C-terminal domain"/>
    <property type="match status" value="1"/>
</dbReference>
<dbReference type="SUPFAM" id="SSF51735">
    <property type="entry name" value="NAD(P)-binding Rossmann-fold domains"/>
    <property type="match status" value="1"/>
</dbReference>
<feature type="chain" id="PRO_1000077333" description="1-deoxy-D-xylulose 5-phosphate reductoisomerase">
    <location>
        <begin position="1"/>
        <end position="385"/>
    </location>
</feature>
<feature type="binding site" evidence="1">
    <location>
        <position position="10"/>
    </location>
    <ligand>
        <name>NADPH</name>
        <dbReference type="ChEBI" id="CHEBI:57783"/>
    </ligand>
</feature>
<feature type="binding site" evidence="1">
    <location>
        <position position="11"/>
    </location>
    <ligand>
        <name>NADPH</name>
        <dbReference type="ChEBI" id="CHEBI:57783"/>
    </ligand>
</feature>
<feature type="binding site" evidence="1">
    <location>
        <position position="12"/>
    </location>
    <ligand>
        <name>NADPH</name>
        <dbReference type="ChEBI" id="CHEBI:57783"/>
    </ligand>
</feature>
<feature type="binding site" evidence="1">
    <location>
        <position position="13"/>
    </location>
    <ligand>
        <name>NADPH</name>
        <dbReference type="ChEBI" id="CHEBI:57783"/>
    </ligand>
</feature>
<feature type="binding site" evidence="1">
    <location>
        <position position="124"/>
    </location>
    <ligand>
        <name>NADPH</name>
        <dbReference type="ChEBI" id="CHEBI:57783"/>
    </ligand>
</feature>
<feature type="binding site" evidence="1">
    <location>
        <position position="125"/>
    </location>
    <ligand>
        <name>1-deoxy-D-xylulose 5-phosphate</name>
        <dbReference type="ChEBI" id="CHEBI:57792"/>
    </ligand>
</feature>
<feature type="binding site" evidence="1">
    <location>
        <position position="126"/>
    </location>
    <ligand>
        <name>NADPH</name>
        <dbReference type="ChEBI" id="CHEBI:57783"/>
    </ligand>
</feature>
<feature type="binding site" evidence="1">
    <location>
        <position position="150"/>
    </location>
    <ligand>
        <name>Mn(2+)</name>
        <dbReference type="ChEBI" id="CHEBI:29035"/>
    </ligand>
</feature>
<feature type="binding site" evidence="1">
    <location>
        <position position="151"/>
    </location>
    <ligand>
        <name>1-deoxy-D-xylulose 5-phosphate</name>
        <dbReference type="ChEBI" id="CHEBI:57792"/>
    </ligand>
</feature>
<feature type="binding site" evidence="1">
    <location>
        <position position="152"/>
    </location>
    <ligand>
        <name>1-deoxy-D-xylulose 5-phosphate</name>
        <dbReference type="ChEBI" id="CHEBI:57792"/>
    </ligand>
</feature>
<feature type="binding site" evidence="1">
    <location>
        <position position="152"/>
    </location>
    <ligand>
        <name>Mn(2+)</name>
        <dbReference type="ChEBI" id="CHEBI:29035"/>
    </ligand>
</feature>
<feature type="binding site" evidence="1">
    <location>
        <position position="176"/>
    </location>
    <ligand>
        <name>1-deoxy-D-xylulose 5-phosphate</name>
        <dbReference type="ChEBI" id="CHEBI:57792"/>
    </ligand>
</feature>
<feature type="binding site" evidence="1">
    <location>
        <position position="199"/>
    </location>
    <ligand>
        <name>1-deoxy-D-xylulose 5-phosphate</name>
        <dbReference type="ChEBI" id="CHEBI:57792"/>
    </ligand>
</feature>
<feature type="binding site" evidence="1">
    <location>
        <position position="205"/>
    </location>
    <ligand>
        <name>NADPH</name>
        <dbReference type="ChEBI" id="CHEBI:57783"/>
    </ligand>
</feature>
<feature type="binding site" evidence="1">
    <location>
        <position position="212"/>
    </location>
    <ligand>
        <name>1-deoxy-D-xylulose 5-phosphate</name>
        <dbReference type="ChEBI" id="CHEBI:57792"/>
    </ligand>
</feature>
<feature type="binding site" evidence="1">
    <location>
        <position position="217"/>
    </location>
    <ligand>
        <name>1-deoxy-D-xylulose 5-phosphate</name>
        <dbReference type="ChEBI" id="CHEBI:57792"/>
    </ligand>
</feature>
<feature type="binding site" evidence="1">
    <location>
        <position position="218"/>
    </location>
    <ligand>
        <name>1-deoxy-D-xylulose 5-phosphate</name>
        <dbReference type="ChEBI" id="CHEBI:57792"/>
    </ligand>
</feature>
<feature type="binding site" evidence="1">
    <location>
        <position position="221"/>
    </location>
    <ligand>
        <name>1-deoxy-D-xylulose 5-phosphate</name>
        <dbReference type="ChEBI" id="CHEBI:57792"/>
    </ligand>
</feature>
<feature type="binding site" evidence="1">
    <location>
        <position position="221"/>
    </location>
    <ligand>
        <name>Mn(2+)</name>
        <dbReference type="ChEBI" id="CHEBI:29035"/>
    </ligand>
</feature>
<evidence type="ECO:0000255" key="1">
    <source>
        <dbReference type="HAMAP-Rule" id="MF_00183"/>
    </source>
</evidence>